<comment type="function">
    <text evidence="1">One of the primary rRNA binding proteins. Required for association of the 30S and 50S subunits to form the 70S ribosome, for tRNA binding and peptide bond formation. It has been suggested to have peptidyltransferase activity; this is somewhat controversial. Makes several contacts with the 16S rRNA in the 70S ribosome.</text>
</comment>
<comment type="subunit">
    <text evidence="1">Part of the 50S ribosomal subunit. Forms a bridge to the 30S subunit in the 70S ribosome.</text>
</comment>
<comment type="similarity">
    <text evidence="1">Belongs to the universal ribosomal protein uL2 family.</text>
</comment>
<evidence type="ECO:0000255" key="1">
    <source>
        <dbReference type="HAMAP-Rule" id="MF_01320"/>
    </source>
</evidence>
<evidence type="ECO:0000256" key="2">
    <source>
        <dbReference type="SAM" id="MobiDB-lite"/>
    </source>
</evidence>
<evidence type="ECO:0000305" key="3"/>
<proteinExistence type="inferred from homology"/>
<reference key="1">
    <citation type="journal article" date="2006" name="Proc. Natl. Acad. Sci. U.S.A.">
        <title>Comparative genomics of the lactic acid bacteria.</title>
        <authorList>
            <person name="Makarova K.S."/>
            <person name="Slesarev A."/>
            <person name="Wolf Y.I."/>
            <person name="Sorokin A."/>
            <person name="Mirkin B."/>
            <person name="Koonin E.V."/>
            <person name="Pavlov A."/>
            <person name="Pavlova N."/>
            <person name="Karamychev V."/>
            <person name="Polouchine N."/>
            <person name="Shakhova V."/>
            <person name="Grigoriev I."/>
            <person name="Lou Y."/>
            <person name="Rohksar D."/>
            <person name="Lucas S."/>
            <person name="Huang K."/>
            <person name="Goodstein D.M."/>
            <person name="Hawkins T."/>
            <person name="Plengvidhya V."/>
            <person name="Welker D."/>
            <person name="Hughes J."/>
            <person name="Goh Y."/>
            <person name="Benson A."/>
            <person name="Baldwin K."/>
            <person name="Lee J.-H."/>
            <person name="Diaz-Muniz I."/>
            <person name="Dosti B."/>
            <person name="Smeianov V."/>
            <person name="Wechter W."/>
            <person name="Barabote R."/>
            <person name="Lorca G."/>
            <person name="Altermann E."/>
            <person name="Barrangou R."/>
            <person name="Ganesan B."/>
            <person name="Xie Y."/>
            <person name="Rawsthorne H."/>
            <person name="Tamir D."/>
            <person name="Parker C."/>
            <person name="Breidt F."/>
            <person name="Broadbent J.R."/>
            <person name="Hutkins R."/>
            <person name="O'Sullivan D."/>
            <person name="Steele J."/>
            <person name="Unlu G."/>
            <person name="Saier M.H. Jr."/>
            <person name="Klaenhammer T."/>
            <person name="Richardson P."/>
            <person name="Kozyavkin S."/>
            <person name="Weimer B.C."/>
            <person name="Mills D.A."/>
        </authorList>
    </citation>
    <scope>NUCLEOTIDE SEQUENCE [LARGE SCALE GENOMIC DNA]</scope>
    <source>
        <strain>ATCC BAA-365 / Lb-18</strain>
    </source>
</reference>
<feature type="chain" id="PRO_0000309939" description="Large ribosomal subunit protein uL2">
    <location>
        <begin position="1"/>
        <end position="278"/>
    </location>
</feature>
<feature type="region of interest" description="Disordered" evidence="2">
    <location>
        <begin position="208"/>
        <end position="278"/>
    </location>
</feature>
<feature type="compositionally biased region" description="Basic residues" evidence="2">
    <location>
        <begin position="209"/>
        <end position="219"/>
    </location>
</feature>
<feature type="compositionally biased region" description="Basic and acidic residues" evidence="2">
    <location>
        <begin position="258"/>
        <end position="270"/>
    </location>
</feature>
<protein>
    <recommendedName>
        <fullName evidence="1">Large ribosomal subunit protein uL2</fullName>
    </recommendedName>
    <alternativeName>
        <fullName evidence="3">50S ribosomal protein L2</fullName>
    </alternativeName>
</protein>
<name>RL2_LACDB</name>
<dbReference type="EMBL" id="CP000412">
    <property type="protein sequence ID" value="ABJ58010.1"/>
    <property type="molecule type" value="Genomic_DNA"/>
</dbReference>
<dbReference type="RefSeq" id="WP_011543641.1">
    <property type="nucleotide sequence ID" value="NC_008529.1"/>
</dbReference>
<dbReference type="SMR" id="Q04C12"/>
<dbReference type="KEGG" id="lbu:LBUL_0353"/>
<dbReference type="HOGENOM" id="CLU_036235_2_1_9"/>
<dbReference type="BioCyc" id="LDEL321956:LBUL_RS01650-MONOMER"/>
<dbReference type="GO" id="GO:0015934">
    <property type="term" value="C:large ribosomal subunit"/>
    <property type="evidence" value="ECO:0007669"/>
    <property type="project" value="InterPro"/>
</dbReference>
<dbReference type="GO" id="GO:0019843">
    <property type="term" value="F:rRNA binding"/>
    <property type="evidence" value="ECO:0007669"/>
    <property type="project" value="UniProtKB-UniRule"/>
</dbReference>
<dbReference type="GO" id="GO:0003735">
    <property type="term" value="F:structural constituent of ribosome"/>
    <property type="evidence" value="ECO:0007669"/>
    <property type="project" value="InterPro"/>
</dbReference>
<dbReference type="GO" id="GO:0016740">
    <property type="term" value="F:transferase activity"/>
    <property type="evidence" value="ECO:0007669"/>
    <property type="project" value="InterPro"/>
</dbReference>
<dbReference type="GO" id="GO:0002181">
    <property type="term" value="P:cytoplasmic translation"/>
    <property type="evidence" value="ECO:0007669"/>
    <property type="project" value="TreeGrafter"/>
</dbReference>
<dbReference type="FunFam" id="2.30.30.30:FF:000001">
    <property type="entry name" value="50S ribosomal protein L2"/>
    <property type="match status" value="1"/>
</dbReference>
<dbReference type="FunFam" id="2.40.50.140:FF:000003">
    <property type="entry name" value="50S ribosomal protein L2"/>
    <property type="match status" value="1"/>
</dbReference>
<dbReference type="FunFam" id="4.10.950.10:FF:000001">
    <property type="entry name" value="50S ribosomal protein L2"/>
    <property type="match status" value="1"/>
</dbReference>
<dbReference type="Gene3D" id="2.30.30.30">
    <property type="match status" value="1"/>
</dbReference>
<dbReference type="Gene3D" id="2.40.50.140">
    <property type="entry name" value="Nucleic acid-binding proteins"/>
    <property type="match status" value="1"/>
</dbReference>
<dbReference type="Gene3D" id="4.10.950.10">
    <property type="entry name" value="Ribosomal protein L2, domain 3"/>
    <property type="match status" value="1"/>
</dbReference>
<dbReference type="HAMAP" id="MF_01320_B">
    <property type="entry name" value="Ribosomal_uL2_B"/>
    <property type="match status" value="1"/>
</dbReference>
<dbReference type="InterPro" id="IPR012340">
    <property type="entry name" value="NA-bd_OB-fold"/>
</dbReference>
<dbReference type="InterPro" id="IPR014722">
    <property type="entry name" value="Rib_uL2_dom2"/>
</dbReference>
<dbReference type="InterPro" id="IPR002171">
    <property type="entry name" value="Ribosomal_uL2"/>
</dbReference>
<dbReference type="InterPro" id="IPR005880">
    <property type="entry name" value="Ribosomal_uL2_bac/org-type"/>
</dbReference>
<dbReference type="InterPro" id="IPR022669">
    <property type="entry name" value="Ribosomal_uL2_C"/>
</dbReference>
<dbReference type="InterPro" id="IPR022671">
    <property type="entry name" value="Ribosomal_uL2_CS"/>
</dbReference>
<dbReference type="InterPro" id="IPR014726">
    <property type="entry name" value="Ribosomal_uL2_dom3"/>
</dbReference>
<dbReference type="InterPro" id="IPR022666">
    <property type="entry name" value="Ribosomal_uL2_RNA-bd_dom"/>
</dbReference>
<dbReference type="InterPro" id="IPR008991">
    <property type="entry name" value="Translation_prot_SH3-like_sf"/>
</dbReference>
<dbReference type="NCBIfam" id="TIGR01171">
    <property type="entry name" value="rplB_bact"/>
    <property type="match status" value="1"/>
</dbReference>
<dbReference type="PANTHER" id="PTHR13691:SF5">
    <property type="entry name" value="LARGE RIBOSOMAL SUBUNIT PROTEIN UL2M"/>
    <property type="match status" value="1"/>
</dbReference>
<dbReference type="PANTHER" id="PTHR13691">
    <property type="entry name" value="RIBOSOMAL PROTEIN L2"/>
    <property type="match status" value="1"/>
</dbReference>
<dbReference type="Pfam" id="PF00181">
    <property type="entry name" value="Ribosomal_L2"/>
    <property type="match status" value="1"/>
</dbReference>
<dbReference type="Pfam" id="PF03947">
    <property type="entry name" value="Ribosomal_L2_C"/>
    <property type="match status" value="1"/>
</dbReference>
<dbReference type="PIRSF" id="PIRSF002158">
    <property type="entry name" value="Ribosomal_L2"/>
    <property type="match status" value="1"/>
</dbReference>
<dbReference type="SMART" id="SM01383">
    <property type="entry name" value="Ribosomal_L2"/>
    <property type="match status" value="1"/>
</dbReference>
<dbReference type="SMART" id="SM01382">
    <property type="entry name" value="Ribosomal_L2_C"/>
    <property type="match status" value="1"/>
</dbReference>
<dbReference type="SUPFAM" id="SSF50249">
    <property type="entry name" value="Nucleic acid-binding proteins"/>
    <property type="match status" value="1"/>
</dbReference>
<dbReference type="SUPFAM" id="SSF50104">
    <property type="entry name" value="Translation proteins SH3-like domain"/>
    <property type="match status" value="1"/>
</dbReference>
<dbReference type="PROSITE" id="PS00467">
    <property type="entry name" value="RIBOSOMAL_L2"/>
    <property type="match status" value="1"/>
</dbReference>
<keyword id="KW-0687">Ribonucleoprotein</keyword>
<keyword id="KW-0689">Ribosomal protein</keyword>
<keyword id="KW-0694">RNA-binding</keyword>
<keyword id="KW-0699">rRNA-binding</keyword>
<organism>
    <name type="scientific">Lactobacillus delbrueckii subsp. bulgaricus (strain ATCC BAA-365 / Lb-18)</name>
    <dbReference type="NCBI Taxonomy" id="321956"/>
    <lineage>
        <taxon>Bacteria</taxon>
        <taxon>Bacillati</taxon>
        <taxon>Bacillota</taxon>
        <taxon>Bacilli</taxon>
        <taxon>Lactobacillales</taxon>
        <taxon>Lactobacillaceae</taxon>
        <taxon>Lactobacillus</taxon>
    </lineage>
</organism>
<sequence>MAIKVYKPTSNGRRNMTSSDFAEITKSKPEKTLLASKSKTAGRNSYGHITVRHRGGGHKQQYRIIDFKRTKDNVKAKIVAIEYDPNRSANIALLHYTDGTKAYILAPKGLTVGSWVESGVDADIKVGNALPLKNIPTGTEVHNIELKPGKGGQIARSAGTSAQVLGVDGKYTQVRLQSGEVREILSECRATIGAVGNEQHSLINIGKAGRSRWMGKRPQSRGSVMNPNDHPHGGGEGKAPVGRPQPMTPWGKKSRGIKTRDSKKASEKLIIRHRKGRK</sequence>
<gene>
    <name evidence="1" type="primary">rplB</name>
    <name type="ordered locus">LBUL_0353</name>
</gene>
<accession>Q04C12</accession>